<proteinExistence type="inferred from homology"/>
<reference key="1">
    <citation type="submission" date="2007-10" db="EMBL/GenBank/DDBJ databases">
        <title>Brucella canis ATCC 23365 whole genome shotgun sequencing project.</title>
        <authorList>
            <person name="Setubal J.C."/>
            <person name="Bowns C."/>
            <person name="Boyle S."/>
            <person name="Crasta O.R."/>
            <person name="Czar M.J."/>
            <person name="Dharmanolla C."/>
            <person name="Gillespie J.J."/>
            <person name="Kenyon R.W."/>
            <person name="Lu J."/>
            <person name="Mane S."/>
            <person name="Mohapatra S."/>
            <person name="Nagrani S."/>
            <person name="Purkayastha A."/>
            <person name="Rajasimha H.K."/>
            <person name="Shallom J.M."/>
            <person name="Shallom S."/>
            <person name="Shukla M."/>
            <person name="Snyder E.E."/>
            <person name="Sobral B.W."/>
            <person name="Wattam A.R."/>
            <person name="Will R."/>
            <person name="Williams K."/>
            <person name="Yoo H."/>
            <person name="Bruce D."/>
            <person name="Detter C."/>
            <person name="Munk C."/>
            <person name="Brettin T.S."/>
        </authorList>
    </citation>
    <scope>NUCLEOTIDE SEQUENCE [LARGE SCALE GENOMIC DNA]</scope>
    <source>
        <strain>ATCC 23365 / NCTC 10854 / RM-666</strain>
    </source>
</reference>
<dbReference type="EMBL" id="CP000872">
    <property type="protein sequence ID" value="ABX62289.1"/>
    <property type="molecule type" value="Genomic_DNA"/>
</dbReference>
<dbReference type="RefSeq" id="WP_002964346.1">
    <property type="nucleotide sequence ID" value="NC_010103.1"/>
</dbReference>
<dbReference type="SMR" id="A9M5N4"/>
<dbReference type="GeneID" id="97533540"/>
<dbReference type="KEGG" id="bcs:BCAN_A1240"/>
<dbReference type="HOGENOM" id="CLU_098841_0_1_5"/>
<dbReference type="PhylomeDB" id="A9M5N4"/>
<dbReference type="Proteomes" id="UP000001385">
    <property type="component" value="Chromosome I"/>
</dbReference>
<dbReference type="GO" id="GO:0022625">
    <property type="term" value="C:cytosolic large ribosomal subunit"/>
    <property type="evidence" value="ECO:0007669"/>
    <property type="project" value="TreeGrafter"/>
</dbReference>
<dbReference type="GO" id="GO:0008097">
    <property type="term" value="F:5S rRNA binding"/>
    <property type="evidence" value="ECO:0007669"/>
    <property type="project" value="TreeGrafter"/>
</dbReference>
<dbReference type="GO" id="GO:0003735">
    <property type="term" value="F:structural constituent of ribosome"/>
    <property type="evidence" value="ECO:0007669"/>
    <property type="project" value="InterPro"/>
</dbReference>
<dbReference type="GO" id="GO:0006412">
    <property type="term" value="P:translation"/>
    <property type="evidence" value="ECO:0007669"/>
    <property type="project" value="UniProtKB-UniRule"/>
</dbReference>
<dbReference type="CDD" id="cd00432">
    <property type="entry name" value="Ribosomal_L18_L5e"/>
    <property type="match status" value="1"/>
</dbReference>
<dbReference type="FunFam" id="3.30.420.100:FF:000001">
    <property type="entry name" value="50S ribosomal protein L18"/>
    <property type="match status" value="1"/>
</dbReference>
<dbReference type="Gene3D" id="3.30.420.100">
    <property type="match status" value="1"/>
</dbReference>
<dbReference type="HAMAP" id="MF_01337_B">
    <property type="entry name" value="Ribosomal_uL18_B"/>
    <property type="match status" value="1"/>
</dbReference>
<dbReference type="InterPro" id="IPR004389">
    <property type="entry name" value="Ribosomal_uL18_bac-type"/>
</dbReference>
<dbReference type="InterPro" id="IPR005484">
    <property type="entry name" value="Ribosomal_uL18_bac/euk"/>
</dbReference>
<dbReference type="NCBIfam" id="TIGR00060">
    <property type="entry name" value="L18_bact"/>
    <property type="match status" value="1"/>
</dbReference>
<dbReference type="PANTHER" id="PTHR12899">
    <property type="entry name" value="39S RIBOSOMAL PROTEIN L18, MITOCHONDRIAL"/>
    <property type="match status" value="1"/>
</dbReference>
<dbReference type="PANTHER" id="PTHR12899:SF3">
    <property type="entry name" value="LARGE RIBOSOMAL SUBUNIT PROTEIN UL18M"/>
    <property type="match status" value="1"/>
</dbReference>
<dbReference type="Pfam" id="PF00861">
    <property type="entry name" value="Ribosomal_L18p"/>
    <property type="match status" value="1"/>
</dbReference>
<dbReference type="SUPFAM" id="SSF53137">
    <property type="entry name" value="Translational machinery components"/>
    <property type="match status" value="1"/>
</dbReference>
<protein>
    <recommendedName>
        <fullName evidence="1">Large ribosomal subunit protein uL18</fullName>
    </recommendedName>
    <alternativeName>
        <fullName evidence="2">50S ribosomal protein L18</fullName>
    </alternativeName>
</protein>
<comment type="function">
    <text evidence="1">This is one of the proteins that bind and probably mediate the attachment of the 5S RNA into the large ribosomal subunit, where it forms part of the central protuberance.</text>
</comment>
<comment type="subunit">
    <text evidence="1">Part of the 50S ribosomal subunit; part of the 5S rRNA/L5/L18/L25 subcomplex. Contacts the 5S and 23S rRNAs.</text>
</comment>
<comment type="similarity">
    <text evidence="1">Belongs to the universal ribosomal protein uL18 family.</text>
</comment>
<accession>A9M5N4</accession>
<evidence type="ECO:0000255" key="1">
    <source>
        <dbReference type="HAMAP-Rule" id="MF_01337"/>
    </source>
</evidence>
<evidence type="ECO:0000305" key="2"/>
<keyword id="KW-1185">Reference proteome</keyword>
<keyword id="KW-0687">Ribonucleoprotein</keyword>
<keyword id="KW-0689">Ribosomal protein</keyword>
<keyword id="KW-0694">RNA-binding</keyword>
<keyword id="KW-0699">rRNA-binding</keyword>
<sequence length="120" mass="12669">MASPKETLQRRAARVRRQVKAVANGRPRLSVHRSSKNIYAQIIDDVRGVTLAAASTLDGDLKGKLKTGADSAAAAAVGKLVAERAVKAGVKDVVFDRGAFIYHGRVKALAEAAREGGLSF</sequence>
<name>RL18_BRUC2</name>
<feature type="chain" id="PRO_1000086652" description="Large ribosomal subunit protein uL18">
    <location>
        <begin position="1"/>
        <end position="120"/>
    </location>
</feature>
<organism>
    <name type="scientific">Brucella canis (strain ATCC 23365 / NCTC 10854 / RM-666)</name>
    <dbReference type="NCBI Taxonomy" id="483179"/>
    <lineage>
        <taxon>Bacteria</taxon>
        <taxon>Pseudomonadati</taxon>
        <taxon>Pseudomonadota</taxon>
        <taxon>Alphaproteobacteria</taxon>
        <taxon>Hyphomicrobiales</taxon>
        <taxon>Brucellaceae</taxon>
        <taxon>Brucella/Ochrobactrum group</taxon>
        <taxon>Brucella</taxon>
    </lineage>
</organism>
<gene>
    <name evidence="1" type="primary">rplR</name>
    <name type="ordered locus">BCAN_A1240</name>
</gene>